<name>RPOC_BRASB</name>
<comment type="function">
    <text evidence="1">DNA-dependent RNA polymerase catalyzes the transcription of DNA into RNA using the four ribonucleoside triphosphates as substrates.</text>
</comment>
<comment type="catalytic activity">
    <reaction evidence="1">
        <text>RNA(n) + a ribonucleoside 5'-triphosphate = RNA(n+1) + diphosphate</text>
        <dbReference type="Rhea" id="RHEA:21248"/>
        <dbReference type="Rhea" id="RHEA-COMP:14527"/>
        <dbReference type="Rhea" id="RHEA-COMP:17342"/>
        <dbReference type="ChEBI" id="CHEBI:33019"/>
        <dbReference type="ChEBI" id="CHEBI:61557"/>
        <dbReference type="ChEBI" id="CHEBI:140395"/>
        <dbReference type="EC" id="2.7.7.6"/>
    </reaction>
</comment>
<comment type="cofactor">
    <cofactor evidence="1">
        <name>Mg(2+)</name>
        <dbReference type="ChEBI" id="CHEBI:18420"/>
    </cofactor>
    <text evidence="1">Binds 1 Mg(2+) ion per subunit.</text>
</comment>
<comment type="cofactor">
    <cofactor evidence="1">
        <name>Zn(2+)</name>
        <dbReference type="ChEBI" id="CHEBI:29105"/>
    </cofactor>
    <text evidence="1">Binds 2 Zn(2+) ions per subunit.</text>
</comment>
<comment type="subunit">
    <text evidence="1">The RNAP catalytic core consists of 2 alpha, 1 beta, 1 beta' and 1 omega subunit. When a sigma factor is associated with the core the holoenzyme is formed, which can initiate transcription.</text>
</comment>
<comment type="similarity">
    <text evidence="1">Belongs to the RNA polymerase beta' chain family.</text>
</comment>
<organism>
    <name type="scientific">Bradyrhizobium sp. (strain BTAi1 / ATCC BAA-1182)</name>
    <dbReference type="NCBI Taxonomy" id="288000"/>
    <lineage>
        <taxon>Bacteria</taxon>
        <taxon>Pseudomonadati</taxon>
        <taxon>Pseudomonadota</taxon>
        <taxon>Alphaproteobacteria</taxon>
        <taxon>Hyphomicrobiales</taxon>
        <taxon>Nitrobacteraceae</taxon>
        <taxon>Bradyrhizobium</taxon>
    </lineage>
</organism>
<keyword id="KW-0240">DNA-directed RNA polymerase</keyword>
<keyword id="KW-0460">Magnesium</keyword>
<keyword id="KW-0479">Metal-binding</keyword>
<keyword id="KW-0548">Nucleotidyltransferase</keyword>
<keyword id="KW-1185">Reference proteome</keyword>
<keyword id="KW-0804">Transcription</keyword>
<keyword id="KW-0808">Transferase</keyword>
<keyword id="KW-0862">Zinc</keyword>
<protein>
    <recommendedName>
        <fullName evidence="1">DNA-directed RNA polymerase subunit beta'</fullName>
        <shortName evidence="1">RNAP subunit beta'</shortName>
        <ecNumber evidence="1">2.7.7.6</ecNumber>
    </recommendedName>
    <alternativeName>
        <fullName evidence="1">RNA polymerase subunit beta'</fullName>
    </alternativeName>
    <alternativeName>
        <fullName evidence="1">Transcriptase subunit beta'</fullName>
    </alternativeName>
</protein>
<evidence type="ECO:0000255" key="1">
    <source>
        <dbReference type="HAMAP-Rule" id="MF_01322"/>
    </source>
</evidence>
<evidence type="ECO:0000256" key="2">
    <source>
        <dbReference type="SAM" id="MobiDB-lite"/>
    </source>
</evidence>
<accession>A5ELN6</accession>
<reference key="1">
    <citation type="journal article" date="2007" name="Science">
        <title>Legumes symbioses: absence of nod genes in photosynthetic bradyrhizobia.</title>
        <authorList>
            <person name="Giraud E."/>
            <person name="Moulin L."/>
            <person name="Vallenet D."/>
            <person name="Barbe V."/>
            <person name="Cytryn E."/>
            <person name="Avarre J.-C."/>
            <person name="Jaubert M."/>
            <person name="Simon D."/>
            <person name="Cartieaux F."/>
            <person name="Prin Y."/>
            <person name="Bena G."/>
            <person name="Hannibal L."/>
            <person name="Fardoux J."/>
            <person name="Kojadinovic M."/>
            <person name="Vuillet L."/>
            <person name="Lajus A."/>
            <person name="Cruveiller S."/>
            <person name="Rouy Z."/>
            <person name="Mangenot S."/>
            <person name="Segurens B."/>
            <person name="Dossat C."/>
            <person name="Franck W.L."/>
            <person name="Chang W.-S."/>
            <person name="Saunders E."/>
            <person name="Bruce D."/>
            <person name="Richardson P."/>
            <person name="Normand P."/>
            <person name="Dreyfus B."/>
            <person name="Pignol D."/>
            <person name="Stacey G."/>
            <person name="Emerich D."/>
            <person name="Vermeglio A."/>
            <person name="Medigue C."/>
            <person name="Sadowsky M."/>
        </authorList>
    </citation>
    <scope>NUCLEOTIDE SEQUENCE [LARGE SCALE GENOMIC DNA]</scope>
    <source>
        <strain>BTAi1 / ATCC BAA-1182</strain>
    </source>
</reference>
<feature type="chain" id="PRO_0000353300" description="DNA-directed RNA polymerase subunit beta'">
    <location>
        <begin position="1"/>
        <end position="1399"/>
    </location>
</feature>
<feature type="region of interest" description="Disordered" evidence="2">
    <location>
        <begin position="1379"/>
        <end position="1399"/>
    </location>
</feature>
<feature type="compositionally biased region" description="Pro residues" evidence="2">
    <location>
        <begin position="1387"/>
        <end position="1399"/>
    </location>
</feature>
<feature type="binding site" evidence="1">
    <location>
        <position position="71"/>
    </location>
    <ligand>
        <name>Zn(2+)</name>
        <dbReference type="ChEBI" id="CHEBI:29105"/>
        <label>1</label>
    </ligand>
</feature>
<feature type="binding site" evidence="1">
    <location>
        <position position="73"/>
    </location>
    <ligand>
        <name>Zn(2+)</name>
        <dbReference type="ChEBI" id="CHEBI:29105"/>
        <label>1</label>
    </ligand>
</feature>
<feature type="binding site" evidence="1">
    <location>
        <position position="86"/>
    </location>
    <ligand>
        <name>Zn(2+)</name>
        <dbReference type="ChEBI" id="CHEBI:29105"/>
        <label>1</label>
    </ligand>
</feature>
<feature type="binding site" evidence="1">
    <location>
        <position position="89"/>
    </location>
    <ligand>
        <name>Zn(2+)</name>
        <dbReference type="ChEBI" id="CHEBI:29105"/>
        <label>1</label>
    </ligand>
</feature>
<feature type="binding site" evidence="1">
    <location>
        <position position="462"/>
    </location>
    <ligand>
        <name>Mg(2+)</name>
        <dbReference type="ChEBI" id="CHEBI:18420"/>
    </ligand>
</feature>
<feature type="binding site" evidence="1">
    <location>
        <position position="464"/>
    </location>
    <ligand>
        <name>Mg(2+)</name>
        <dbReference type="ChEBI" id="CHEBI:18420"/>
    </ligand>
</feature>
<feature type="binding site" evidence="1">
    <location>
        <position position="466"/>
    </location>
    <ligand>
        <name>Mg(2+)</name>
        <dbReference type="ChEBI" id="CHEBI:18420"/>
    </ligand>
</feature>
<feature type="binding site" evidence="1">
    <location>
        <position position="810"/>
    </location>
    <ligand>
        <name>Zn(2+)</name>
        <dbReference type="ChEBI" id="CHEBI:29105"/>
        <label>2</label>
    </ligand>
</feature>
<feature type="binding site" evidence="1">
    <location>
        <position position="884"/>
    </location>
    <ligand>
        <name>Zn(2+)</name>
        <dbReference type="ChEBI" id="CHEBI:29105"/>
        <label>2</label>
    </ligand>
</feature>
<feature type="binding site" evidence="1">
    <location>
        <position position="891"/>
    </location>
    <ligand>
        <name>Zn(2+)</name>
        <dbReference type="ChEBI" id="CHEBI:29105"/>
        <label>2</label>
    </ligand>
</feature>
<feature type="binding site" evidence="1">
    <location>
        <position position="894"/>
    </location>
    <ligand>
        <name>Zn(2+)</name>
        <dbReference type="ChEBI" id="CHEBI:29105"/>
        <label>2</label>
    </ligand>
</feature>
<sequence>MNQEIMNLFNPTTPAQVFDQIRISIASPEKILSWSYGEIKKPETINYRTFKPERDGLFCARIFGPIKDYECLCGKYKRMKYKGIICEKCSVEVTLSRVRRERMGHIELAAPVAHIWFLKSLPSRIGLLLDMTLKDLERILYFEYYVVLEPGLTALKDRQLLSEDEYLKAQDEYGQDSFTAMIGAEAIRELLRGLELEKLEQTLRAEMQETDSDIKHKKLAKRLKIVEAFRHSGNKPEWMIMTVVPVIPPDLRPLVPLDGGRFATSDLNDLYRRVINRNNRLKRLMELRAPDIIIRNEKRMLQEAVDALFDNGRRGRVITGANKRPLKSLADMLKGKQGRFRQNLLGKRVDYSGRSVIVVGPELRLHQCGLPKKMALELFKPFIYSRLDAKGLSTTVKQAKKLVEKERPEVWDILDEVIREHPVLLNRAPTLHRLGIQAFEPVLIEGKAIQLHPLVCSAFNADFDGDQMAVHVPLSLEAQLEARVLMMSTNNILHPANGQPIIVPSQDIVLGLYYLSIMREGMNGQGMTFGNMAELEHALHAKAIHLHSKIKYRWEGMDETGKISKRWIETTAGRVMLGNVLPRHPRISYEIINKLMTKREISGVIDQVYRHCGQKETVIFCDRIMALGFYNAFKAGISFGKDDMVVPAGKWKIVDTTRTLAKDFEQQYNDGLITHGEKYNKVVDAWSKASEEIAKEMMKEISVTKKTATGADADINSIYMMSHSGARGSPAQMRQLAGMRGLMAKPSGEIIETPIISNFKEGLSVLEYFNSTHGARKGLADTALKTANSGYLTRRLVDVAQDCIITQDDCGTHLGIKMRAIVDAGTVVASLGSRILGRVPCDDVRDPATNAVLVKAGTLMEESHIDAIQQAGVQEVKIRSALTCELVNGICKMCYGRDLARGTPVNHGEAVGVIAAQSIGEPGTQLTMRTFHIGGAAQLNEQSFVESNFEGRVVIKNKAIARNSEGHLIAMVRNMVVTIVDPDGSERATHRIQYGARMHVDDGDMIKRGQRIAEWDPYTRPILTEAEGTIGFEDLTEGLSISETLDESTGIAKRVVIDWRGTRGGADLRPAIVIKGKDGKVLKLARGGDARYMLSVDAILSVDVGTTVKPGDILARISTESAKTRDITGGLPRVAELFEARKPKDAAIIAEIAGTIRFGRDYKNKRRISIEPVDKTEEPREYLIPKGKHIHLQDGDIVEKGDFIVEGNPAPHDILAIKGIEELAAYLVNEIQEVYRLQGVLINDKHIEVIVRQMLQKIEVTDQGDTDMIAGEQVDKIEFDALNAKAVEEGKKPATGNPVLLGITKASLQTRSFFSAASFQETTRVLTEAAVNGKIDPLEGLKENVIVGRLIPAGTGASMARIREVALKRDKLILDEREKQAAIVPSQPEPQPLALPPAE</sequence>
<proteinExistence type="inferred from homology"/>
<dbReference type="EC" id="2.7.7.6" evidence="1"/>
<dbReference type="EMBL" id="CP000494">
    <property type="protein sequence ID" value="ABQ37080.1"/>
    <property type="molecule type" value="Genomic_DNA"/>
</dbReference>
<dbReference type="RefSeq" id="WP_012045051.1">
    <property type="nucleotide sequence ID" value="NC_009485.1"/>
</dbReference>
<dbReference type="SMR" id="A5ELN6"/>
<dbReference type="STRING" id="288000.BBta_5080"/>
<dbReference type="KEGG" id="bbt:BBta_5080"/>
<dbReference type="eggNOG" id="COG0086">
    <property type="taxonomic scope" value="Bacteria"/>
</dbReference>
<dbReference type="HOGENOM" id="CLU_000524_3_1_5"/>
<dbReference type="OrthoDB" id="9815296at2"/>
<dbReference type="Proteomes" id="UP000000246">
    <property type="component" value="Chromosome"/>
</dbReference>
<dbReference type="GO" id="GO:0000428">
    <property type="term" value="C:DNA-directed RNA polymerase complex"/>
    <property type="evidence" value="ECO:0007669"/>
    <property type="project" value="UniProtKB-KW"/>
</dbReference>
<dbReference type="GO" id="GO:0003677">
    <property type="term" value="F:DNA binding"/>
    <property type="evidence" value="ECO:0007669"/>
    <property type="project" value="UniProtKB-UniRule"/>
</dbReference>
<dbReference type="GO" id="GO:0003899">
    <property type="term" value="F:DNA-directed RNA polymerase activity"/>
    <property type="evidence" value="ECO:0007669"/>
    <property type="project" value="UniProtKB-UniRule"/>
</dbReference>
<dbReference type="GO" id="GO:0000287">
    <property type="term" value="F:magnesium ion binding"/>
    <property type="evidence" value="ECO:0007669"/>
    <property type="project" value="UniProtKB-UniRule"/>
</dbReference>
<dbReference type="GO" id="GO:0008270">
    <property type="term" value="F:zinc ion binding"/>
    <property type="evidence" value="ECO:0007669"/>
    <property type="project" value="UniProtKB-UniRule"/>
</dbReference>
<dbReference type="GO" id="GO:0006351">
    <property type="term" value="P:DNA-templated transcription"/>
    <property type="evidence" value="ECO:0007669"/>
    <property type="project" value="UniProtKB-UniRule"/>
</dbReference>
<dbReference type="CDD" id="cd02655">
    <property type="entry name" value="RNAP_beta'_C"/>
    <property type="match status" value="1"/>
</dbReference>
<dbReference type="CDD" id="cd01609">
    <property type="entry name" value="RNAP_beta'_N"/>
    <property type="match status" value="1"/>
</dbReference>
<dbReference type="Gene3D" id="1.10.132.30">
    <property type="match status" value="1"/>
</dbReference>
<dbReference type="Gene3D" id="1.10.150.390">
    <property type="match status" value="1"/>
</dbReference>
<dbReference type="Gene3D" id="1.10.1790.20">
    <property type="match status" value="1"/>
</dbReference>
<dbReference type="Gene3D" id="1.10.40.90">
    <property type="match status" value="1"/>
</dbReference>
<dbReference type="Gene3D" id="2.40.40.20">
    <property type="match status" value="1"/>
</dbReference>
<dbReference type="Gene3D" id="2.40.50.100">
    <property type="match status" value="3"/>
</dbReference>
<dbReference type="Gene3D" id="4.10.860.120">
    <property type="entry name" value="RNA polymerase II, clamp domain"/>
    <property type="match status" value="1"/>
</dbReference>
<dbReference type="Gene3D" id="1.10.274.100">
    <property type="entry name" value="RNA polymerase Rpb1, domain 3"/>
    <property type="match status" value="2"/>
</dbReference>
<dbReference type="HAMAP" id="MF_01322">
    <property type="entry name" value="RNApol_bact_RpoC"/>
    <property type="match status" value="1"/>
</dbReference>
<dbReference type="InterPro" id="IPR045867">
    <property type="entry name" value="DNA-dir_RpoC_beta_prime"/>
</dbReference>
<dbReference type="InterPro" id="IPR012754">
    <property type="entry name" value="DNA-dir_RpoC_beta_prime_bact"/>
</dbReference>
<dbReference type="InterPro" id="IPR000722">
    <property type="entry name" value="RNA_pol_asu"/>
</dbReference>
<dbReference type="InterPro" id="IPR006592">
    <property type="entry name" value="RNA_pol_N"/>
</dbReference>
<dbReference type="InterPro" id="IPR007080">
    <property type="entry name" value="RNA_pol_Rpb1_1"/>
</dbReference>
<dbReference type="InterPro" id="IPR007066">
    <property type="entry name" value="RNA_pol_Rpb1_3"/>
</dbReference>
<dbReference type="InterPro" id="IPR042102">
    <property type="entry name" value="RNA_pol_Rpb1_3_sf"/>
</dbReference>
<dbReference type="InterPro" id="IPR007083">
    <property type="entry name" value="RNA_pol_Rpb1_4"/>
</dbReference>
<dbReference type="InterPro" id="IPR007081">
    <property type="entry name" value="RNA_pol_Rpb1_5"/>
</dbReference>
<dbReference type="InterPro" id="IPR044893">
    <property type="entry name" value="RNA_pol_Rpb1_clamp_domain"/>
</dbReference>
<dbReference type="InterPro" id="IPR038120">
    <property type="entry name" value="Rpb1_funnel_sf"/>
</dbReference>
<dbReference type="NCBIfam" id="TIGR02386">
    <property type="entry name" value="rpoC_TIGR"/>
    <property type="match status" value="1"/>
</dbReference>
<dbReference type="PANTHER" id="PTHR19376">
    <property type="entry name" value="DNA-DIRECTED RNA POLYMERASE"/>
    <property type="match status" value="1"/>
</dbReference>
<dbReference type="PANTHER" id="PTHR19376:SF54">
    <property type="entry name" value="DNA-DIRECTED RNA POLYMERASE SUBUNIT BETA"/>
    <property type="match status" value="1"/>
</dbReference>
<dbReference type="Pfam" id="PF04997">
    <property type="entry name" value="RNA_pol_Rpb1_1"/>
    <property type="match status" value="1"/>
</dbReference>
<dbReference type="Pfam" id="PF00623">
    <property type="entry name" value="RNA_pol_Rpb1_2"/>
    <property type="match status" value="2"/>
</dbReference>
<dbReference type="Pfam" id="PF04983">
    <property type="entry name" value="RNA_pol_Rpb1_3"/>
    <property type="match status" value="1"/>
</dbReference>
<dbReference type="Pfam" id="PF05000">
    <property type="entry name" value="RNA_pol_Rpb1_4"/>
    <property type="match status" value="1"/>
</dbReference>
<dbReference type="Pfam" id="PF04998">
    <property type="entry name" value="RNA_pol_Rpb1_5"/>
    <property type="match status" value="1"/>
</dbReference>
<dbReference type="SMART" id="SM00663">
    <property type="entry name" value="RPOLA_N"/>
    <property type="match status" value="1"/>
</dbReference>
<dbReference type="SUPFAM" id="SSF64484">
    <property type="entry name" value="beta and beta-prime subunits of DNA dependent RNA-polymerase"/>
    <property type="match status" value="1"/>
</dbReference>
<gene>
    <name evidence="1" type="primary">rpoC</name>
    <name type="ordered locus">BBta_5080</name>
</gene>